<name>YUAT_ECOLI</name>
<keyword id="KW-0614">Plasmid</keyword>
<reference key="1">
    <citation type="submission" date="2000-04" db="EMBL/GenBank/DDBJ databases">
        <title>Complete nucleotide sequence of the F plasmid: its implications for organization and diversification of plasmid genomes.</title>
        <authorList>
            <person name="Shimizu H."/>
            <person name="Saitoh Y."/>
            <person name="Suda Y."/>
            <person name="Uehara K."/>
            <person name="Sampei G."/>
            <person name="Mizobuchi K."/>
        </authorList>
    </citation>
    <scope>NUCLEOTIDE SEQUENCE [LARGE SCALE GENOMIC DNA]</scope>
    <source>
        <strain>K12 / CR63</strain>
    </source>
</reference>
<geneLocation type="plasmid">
    <name>F</name>
</geneLocation>
<dbReference type="EMBL" id="AP001918">
    <property type="protein sequence ID" value="BAA97904.1"/>
    <property type="molecule type" value="Genomic_DNA"/>
</dbReference>
<dbReference type="RefSeq" id="NP_061413.1">
    <property type="nucleotide sequence ID" value="NC_002483.1"/>
</dbReference>
<dbReference type="KEGG" id="ecoc:C3026_24290"/>
<proteinExistence type="predicted"/>
<accession>Q9JMS1</accession>
<sequence length="153" mass="18133">MFEDPEIRIHKLQPCTQCPRLEDLWFSWYFRYIHDRCLRSSACHQDIHGASLYAPLALKQTYEVYFGYDCTLRKYGRFRQKLPVKTDFRKNGARRRPVTGRSPRTGEEAQWICNHSEQVRPEAFIIGSVCCFSGMIYPHIQRPDPVNRSMNDQ</sequence>
<protein>
    <recommendedName>
        <fullName>Uncharacterized protein YuaT</fullName>
    </recommendedName>
</protein>
<gene>
    <name type="primary">yuaT</name>
    <name type="synonym">ydhA</name>
    <name type="ordered locus">ECOK12F034</name>
</gene>
<feature type="chain" id="PRO_0000268024" description="Uncharacterized protein YuaT">
    <location>
        <begin position="1"/>
        <end position="153"/>
    </location>
</feature>
<organism>
    <name type="scientific">Escherichia coli (strain K12)</name>
    <dbReference type="NCBI Taxonomy" id="83333"/>
    <lineage>
        <taxon>Bacteria</taxon>
        <taxon>Pseudomonadati</taxon>
        <taxon>Pseudomonadota</taxon>
        <taxon>Gammaproteobacteria</taxon>
        <taxon>Enterobacterales</taxon>
        <taxon>Enterobacteriaceae</taxon>
        <taxon>Escherichia</taxon>
    </lineage>
</organism>